<reference key="1">
    <citation type="journal article" date="2011" name="J. Bacteriol.">
        <title>Comparative genomics of 28 Salmonella enterica isolates: evidence for CRISPR-mediated adaptive sublineage evolution.</title>
        <authorList>
            <person name="Fricke W.F."/>
            <person name="Mammel M.K."/>
            <person name="McDermott P.F."/>
            <person name="Tartera C."/>
            <person name="White D.G."/>
            <person name="Leclerc J.E."/>
            <person name="Ravel J."/>
            <person name="Cebula T.A."/>
        </authorList>
    </citation>
    <scope>NUCLEOTIDE SEQUENCE [LARGE SCALE GENOMIC DNA]</scope>
    <source>
        <strain>CVM19633</strain>
    </source>
</reference>
<name>YAEH_SALSV</name>
<protein>
    <recommendedName>
        <fullName evidence="1">UPF0325 protein YaeH</fullName>
    </recommendedName>
</protein>
<dbReference type="EMBL" id="CP001127">
    <property type="protein sequence ID" value="ACF89445.1"/>
    <property type="molecule type" value="Genomic_DNA"/>
</dbReference>
<dbReference type="RefSeq" id="WP_000272193.1">
    <property type="nucleotide sequence ID" value="NC_011094.1"/>
</dbReference>
<dbReference type="SMR" id="B4TXR6"/>
<dbReference type="KEGG" id="sew:SeSA_A0235"/>
<dbReference type="HOGENOM" id="CLU_136774_0_0_6"/>
<dbReference type="Proteomes" id="UP000001865">
    <property type="component" value="Chromosome"/>
</dbReference>
<dbReference type="HAMAP" id="MF_01519">
    <property type="entry name" value="UPF0325"/>
    <property type="match status" value="1"/>
</dbReference>
<dbReference type="InterPro" id="IPR020911">
    <property type="entry name" value="UPF0325"/>
</dbReference>
<dbReference type="NCBIfam" id="NF010213">
    <property type="entry name" value="PRK13677.1"/>
    <property type="match status" value="1"/>
</dbReference>
<dbReference type="Pfam" id="PF11944">
    <property type="entry name" value="DUF3461"/>
    <property type="match status" value="1"/>
</dbReference>
<evidence type="ECO:0000255" key="1">
    <source>
        <dbReference type="HAMAP-Rule" id="MF_01519"/>
    </source>
</evidence>
<comment type="similarity">
    <text evidence="1">Belongs to the UPF0325 family.</text>
</comment>
<proteinExistence type="inferred from homology"/>
<gene>
    <name evidence="1" type="primary">yaeH</name>
    <name type="ordered locus">SeSA_A0235</name>
</gene>
<accession>B4TXR6</accession>
<sequence length="128" mass="15094">MYDNLKSLGITNPEEIDRYSLRQEANNDILKIYFQKDRGEFFAKSVKFKYPRQRKTVVADGIGQGYKEVQEISPNLRYVIDELDQICQRDRSELDLKRKILDDLRHLESVVANKISEIEADLDKLTRK</sequence>
<organism>
    <name type="scientific">Salmonella schwarzengrund (strain CVM19633)</name>
    <dbReference type="NCBI Taxonomy" id="439843"/>
    <lineage>
        <taxon>Bacteria</taxon>
        <taxon>Pseudomonadati</taxon>
        <taxon>Pseudomonadota</taxon>
        <taxon>Gammaproteobacteria</taxon>
        <taxon>Enterobacterales</taxon>
        <taxon>Enterobacteriaceae</taxon>
        <taxon>Salmonella</taxon>
    </lineage>
</organism>
<feature type="chain" id="PRO_1000198442" description="UPF0325 protein YaeH">
    <location>
        <begin position="1"/>
        <end position="128"/>
    </location>
</feature>